<dbReference type="EMBL" id="AK005741">
    <property type="protein sequence ID" value="BAB24216.1"/>
    <property type="molecule type" value="mRNA"/>
</dbReference>
<dbReference type="EMBL" id="BC049741">
    <property type="protein sequence ID" value="AAH49741.1"/>
    <property type="molecule type" value="mRNA"/>
</dbReference>
<dbReference type="CCDS" id="CCDS28214.1"/>
<dbReference type="RefSeq" id="NP_081322.1">
    <property type="nucleotide sequence ID" value="NM_027046.4"/>
</dbReference>
<dbReference type="SMR" id="Q9DAL3"/>
<dbReference type="STRING" id="10090.ENSMUSP00000049864"/>
<dbReference type="iPTMnet" id="Q9DAL3"/>
<dbReference type="PhosphoSitePlus" id="Q9DAL3"/>
<dbReference type="SwissPalm" id="Q9DAL3"/>
<dbReference type="PaxDb" id="10090-ENSMUSP00000049864"/>
<dbReference type="ProteomicsDB" id="265365"/>
<dbReference type="Antibodypedia" id="46519">
    <property type="antibodies" value="139 antibodies from 16 providers"/>
</dbReference>
<dbReference type="DNASU" id="69339"/>
<dbReference type="Ensembl" id="ENSMUST00000062439.6">
    <property type="protein sequence ID" value="ENSMUSP00000049864.5"/>
    <property type="gene ID" value="ENSMUSG00000050685.6"/>
</dbReference>
<dbReference type="GeneID" id="69339"/>
<dbReference type="KEGG" id="mmu:69339"/>
<dbReference type="UCSC" id="uc007zkx.1">
    <property type="organism name" value="mouse"/>
</dbReference>
<dbReference type="AGR" id="MGI:1916589"/>
<dbReference type="CTD" id="84692"/>
<dbReference type="MGI" id="MGI:1916589">
    <property type="gene designation" value="Ccdc54"/>
</dbReference>
<dbReference type="VEuPathDB" id="HostDB:ENSMUSG00000050685"/>
<dbReference type="eggNOG" id="ENOG502SSGK">
    <property type="taxonomic scope" value="Eukaryota"/>
</dbReference>
<dbReference type="GeneTree" id="ENSGT00390000008948"/>
<dbReference type="HOGENOM" id="CLU_074373_0_0_1"/>
<dbReference type="InParanoid" id="Q9DAL3"/>
<dbReference type="OMA" id="QMWTSNL"/>
<dbReference type="OrthoDB" id="9446450at2759"/>
<dbReference type="PhylomeDB" id="Q9DAL3"/>
<dbReference type="TreeFam" id="TF338361"/>
<dbReference type="BioGRID-ORCS" id="69339">
    <property type="hits" value="5 hits in 75 CRISPR screens"/>
</dbReference>
<dbReference type="ChiTaRS" id="Ccdc54">
    <property type="organism name" value="mouse"/>
</dbReference>
<dbReference type="PRO" id="PR:Q9DAL3"/>
<dbReference type="Proteomes" id="UP000000589">
    <property type="component" value="Chromosome 16"/>
</dbReference>
<dbReference type="RNAct" id="Q9DAL3">
    <property type="molecule type" value="protein"/>
</dbReference>
<dbReference type="Bgee" id="ENSMUSG00000050685">
    <property type="expression patterns" value="Expressed in seminiferous tubule of testis and 6 other cell types or tissues"/>
</dbReference>
<dbReference type="Gene3D" id="1.10.287.1490">
    <property type="match status" value="1"/>
</dbReference>
<dbReference type="InterPro" id="IPR037758">
    <property type="entry name" value="Ccdc54"/>
</dbReference>
<dbReference type="PANTHER" id="PTHR37880">
    <property type="entry name" value="COILED-COIL DOMAIN-CONTAINING PROTEIN 54"/>
    <property type="match status" value="1"/>
</dbReference>
<dbReference type="PANTHER" id="PTHR37880:SF1">
    <property type="entry name" value="COILED-COIL DOMAIN-CONTAINING PROTEIN 54"/>
    <property type="match status" value="1"/>
</dbReference>
<protein>
    <recommendedName>
        <fullName>Coiled-coil domain-containing protein 54</fullName>
    </recommendedName>
</protein>
<evidence type="ECO:0000250" key="1">
    <source>
        <dbReference type="UniProtKB" id="Q8NEL0"/>
    </source>
</evidence>
<evidence type="ECO:0000255" key="2"/>
<evidence type="ECO:0000256" key="3">
    <source>
        <dbReference type="SAM" id="MobiDB-lite"/>
    </source>
</evidence>
<accession>Q9DAL3</accession>
<organism>
    <name type="scientific">Mus musculus</name>
    <name type="common">Mouse</name>
    <dbReference type="NCBI Taxonomy" id="10090"/>
    <lineage>
        <taxon>Eukaryota</taxon>
        <taxon>Metazoa</taxon>
        <taxon>Chordata</taxon>
        <taxon>Craniata</taxon>
        <taxon>Vertebrata</taxon>
        <taxon>Euteleostomi</taxon>
        <taxon>Mammalia</taxon>
        <taxon>Eutheria</taxon>
        <taxon>Euarchontoglires</taxon>
        <taxon>Glires</taxon>
        <taxon>Rodentia</taxon>
        <taxon>Myomorpha</taxon>
        <taxon>Muroidea</taxon>
        <taxon>Muridae</taxon>
        <taxon>Murinae</taxon>
        <taxon>Mus</taxon>
        <taxon>Mus</taxon>
    </lineage>
</organism>
<reference key="1">
    <citation type="journal article" date="2005" name="Science">
        <title>The transcriptional landscape of the mammalian genome.</title>
        <authorList>
            <person name="Carninci P."/>
            <person name="Kasukawa T."/>
            <person name="Katayama S."/>
            <person name="Gough J."/>
            <person name="Frith M.C."/>
            <person name="Maeda N."/>
            <person name="Oyama R."/>
            <person name="Ravasi T."/>
            <person name="Lenhard B."/>
            <person name="Wells C."/>
            <person name="Kodzius R."/>
            <person name="Shimokawa K."/>
            <person name="Bajic V.B."/>
            <person name="Brenner S.E."/>
            <person name="Batalov S."/>
            <person name="Forrest A.R."/>
            <person name="Zavolan M."/>
            <person name="Davis M.J."/>
            <person name="Wilming L.G."/>
            <person name="Aidinis V."/>
            <person name="Allen J.E."/>
            <person name="Ambesi-Impiombato A."/>
            <person name="Apweiler R."/>
            <person name="Aturaliya R.N."/>
            <person name="Bailey T.L."/>
            <person name="Bansal M."/>
            <person name="Baxter L."/>
            <person name="Beisel K.W."/>
            <person name="Bersano T."/>
            <person name="Bono H."/>
            <person name="Chalk A.M."/>
            <person name="Chiu K.P."/>
            <person name="Choudhary V."/>
            <person name="Christoffels A."/>
            <person name="Clutterbuck D.R."/>
            <person name="Crowe M.L."/>
            <person name="Dalla E."/>
            <person name="Dalrymple B.P."/>
            <person name="de Bono B."/>
            <person name="Della Gatta G."/>
            <person name="di Bernardo D."/>
            <person name="Down T."/>
            <person name="Engstrom P."/>
            <person name="Fagiolini M."/>
            <person name="Faulkner G."/>
            <person name="Fletcher C.F."/>
            <person name="Fukushima T."/>
            <person name="Furuno M."/>
            <person name="Futaki S."/>
            <person name="Gariboldi M."/>
            <person name="Georgii-Hemming P."/>
            <person name="Gingeras T.R."/>
            <person name="Gojobori T."/>
            <person name="Green R.E."/>
            <person name="Gustincich S."/>
            <person name="Harbers M."/>
            <person name="Hayashi Y."/>
            <person name="Hensch T.K."/>
            <person name="Hirokawa N."/>
            <person name="Hill D."/>
            <person name="Huminiecki L."/>
            <person name="Iacono M."/>
            <person name="Ikeo K."/>
            <person name="Iwama A."/>
            <person name="Ishikawa T."/>
            <person name="Jakt M."/>
            <person name="Kanapin A."/>
            <person name="Katoh M."/>
            <person name="Kawasawa Y."/>
            <person name="Kelso J."/>
            <person name="Kitamura H."/>
            <person name="Kitano H."/>
            <person name="Kollias G."/>
            <person name="Krishnan S.P."/>
            <person name="Kruger A."/>
            <person name="Kummerfeld S.K."/>
            <person name="Kurochkin I.V."/>
            <person name="Lareau L.F."/>
            <person name="Lazarevic D."/>
            <person name="Lipovich L."/>
            <person name="Liu J."/>
            <person name="Liuni S."/>
            <person name="McWilliam S."/>
            <person name="Madan Babu M."/>
            <person name="Madera M."/>
            <person name="Marchionni L."/>
            <person name="Matsuda H."/>
            <person name="Matsuzawa S."/>
            <person name="Miki H."/>
            <person name="Mignone F."/>
            <person name="Miyake S."/>
            <person name="Morris K."/>
            <person name="Mottagui-Tabar S."/>
            <person name="Mulder N."/>
            <person name="Nakano N."/>
            <person name="Nakauchi H."/>
            <person name="Ng P."/>
            <person name="Nilsson R."/>
            <person name="Nishiguchi S."/>
            <person name="Nishikawa S."/>
            <person name="Nori F."/>
            <person name="Ohara O."/>
            <person name="Okazaki Y."/>
            <person name="Orlando V."/>
            <person name="Pang K.C."/>
            <person name="Pavan W.J."/>
            <person name="Pavesi G."/>
            <person name="Pesole G."/>
            <person name="Petrovsky N."/>
            <person name="Piazza S."/>
            <person name="Reed J."/>
            <person name="Reid J.F."/>
            <person name="Ring B.Z."/>
            <person name="Ringwald M."/>
            <person name="Rost B."/>
            <person name="Ruan Y."/>
            <person name="Salzberg S.L."/>
            <person name="Sandelin A."/>
            <person name="Schneider C."/>
            <person name="Schoenbach C."/>
            <person name="Sekiguchi K."/>
            <person name="Semple C.A."/>
            <person name="Seno S."/>
            <person name="Sessa L."/>
            <person name="Sheng Y."/>
            <person name="Shibata Y."/>
            <person name="Shimada H."/>
            <person name="Shimada K."/>
            <person name="Silva D."/>
            <person name="Sinclair B."/>
            <person name="Sperling S."/>
            <person name="Stupka E."/>
            <person name="Sugiura K."/>
            <person name="Sultana R."/>
            <person name="Takenaka Y."/>
            <person name="Taki K."/>
            <person name="Tammoja K."/>
            <person name="Tan S.L."/>
            <person name="Tang S."/>
            <person name="Taylor M.S."/>
            <person name="Tegner J."/>
            <person name="Teichmann S.A."/>
            <person name="Ueda H.R."/>
            <person name="van Nimwegen E."/>
            <person name="Verardo R."/>
            <person name="Wei C.L."/>
            <person name="Yagi K."/>
            <person name="Yamanishi H."/>
            <person name="Zabarovsky E."/>
            <person name="Zhu S."/>
            <person name="Zimmer A."/>
            <person name="Hide W."/>
            <person name="Bult C."/>
            <person name="Grimmond S.M."/>
            <person name="Teasdale R.D."/>
            <person name="Liu E.T."/>
            <person name="Brusic V."/>
            <person name="Quackenbush J."/>
            <person name="Wahlestedt C."/>
            <person name="Mattick J.S."/>
            <person name="Hume D.A."/>
            <person name="Kai C."/>
            <person name="Sasaki D."/>
            <person name="Tomaru Y."/>
            <person name="Fukuda S."/>
            <person name="Kanamori-Katayama M."/>
            <person name="Suzuki M."/>
            <person name="Aoki J."/>
            <person name="Arakawa T."/>
            <person name="Iida J."/>
            <person name="Imamura K."/>
            <person name="Itoh M."/>
            <person name="Kato T."/>
            <person name="Kawaji H."/>
            <person name="Kawagashira N."/>
            <person name="Kawashima T."/>
            <person name="Kojima M."/>
            <person name="Kondo S."/>
            <person name="Konno H."/>
            <person name="Nakano K."/>
            <person name="Ninomiya N."/>
            <person name="Nishio T."/>
            <person name="Okada M."/>
            <person name="Plessy C."/>
            <person name="Shibata K."/>
            <person name="Shiraki T."/>
            <person name="Suzuki S."/>
            <person name="Tagami M."/>
            <person name="Waki K."/>
            <person name="Watahiki A."/>
            <person name="Okamura-Oho Y."/>
            <person name="Suzuki H."/>
            <person name="Kawai J."/>
            <person name="Hayashizaki Y."/>
        </authorList>
    </citation>
    <scope>NUCLEOTIDE SEQUENCE [LARGE SCALE MRNA]</scope>
    <source>
        <strain>C57BL/6J</strain>
        <tissue>Testis</tissue>
    </source>
</reference>
<reference key="2">
    <citation type="journal article" date="2004" name="Genome Res.">
        <title>The status, quality, and expansion of the NIH full-length cDNA project: the Mammalian Gene Collection (MGC).</title>
        <authorList>
            <consortium name="The MGC Project Team"/>
        </authorList>
    </citation>
    <scope>NUCLEOTIDE SEQUENCE [LARGE SCALE MRNA]</scope>
    <source>
        <tissue>Testis</tissue>
    </source>
</reference>
<gene>
    <name type="primary">Ccdc54</name>
</gene>
<keyword id="KW-0175">Coiled coil</keyword>
<keyword id="KW-0597">Phosphoprotein</keyword>
<keyword id="KW-1185">Reference proteome</keyword>
<sequence>MYRFHTKRVRAAAGQVWTANLHKIRRSLKNVYQKCTTHHSYSTSYPTRASYGCDGDTLSLNEDMNLPAMLQDIKTGQTELLNQMTNIVSSISNIQEKINHYQNQMEALEARINISEDRQTATTKDMLSMKEDINTLKKKVTELESQNSYSSIHCLEVLEGQRGKEFVQLLHKLLQTETPKGTATSPDTVISSAEPERVSSYPEPTGELKKKTTSPQNITLKKNNSLQNASVGCKKVRSNIYIYPDFSTWIKLTFVHGGNWRFFLSATKLEEFIQWLLSRSTILPEEPQIIPQRDYAFTGAIGRLATICLSLFHYVYCLFGSSKEEITRL</sequence>
<name>CCD54_MOUSE</name>
<proteinExistence type="evidence at transcript level"/>
<feature type="chain" id="PRO_0000286670" description="Coiled-coil domain-containing protein 54">
    <location>
        <begin position="1"/>
        <end position="329"/>
    </location>
</feature>
<feature type="region of interest" description="Disordered" evidence="3">
    <location>
        <begin position="178"/>
        <end position="214"/>
    </location>
</feature>
<feature type="coiled-coil region" evidence="2">
    <location>
        <begin position="86"/>
        <end position="149"/>
    </location>
</feature>
<feature type="compositionally biased region" description="Polar residues" evidence="3">
    <location>
        <begin position="178"/>
        <end position="191"/>
    </location>
</feature>
<feature type="modified residue" description="Phosphothreonine" evidence="1">
    <location>
        <position position="182"/>
    </location>
</feature>